<evidence type="ECO:0000255" key="1">
    <source>
        <dbReference type="HAMAP-Rule" id="MF_00152"/>
    </source>
</evidence>
<gene>
    <name evidence="1" type="primary">nfo</name>
    <name type="ordered locus">PC1_1655</name>
</gene>
<comment type="function">
    <text evidence="1">Endonuclease IV plays a role in DNA repair. It cleaves phosphodiester bonds at apurinic or apyrimidinic (AP) sites, generating a 3'-hydroxyl group and a 5'-terminal sugar phosphate.</text>
</comment>
<comment type="catalytic activity">
    <reaction evidence="1">
        <text>Endonucleolytic cleavage to 5'-phosphooligonucleotide end-products.</text>
        <dbReference type="EC" id="3.1.21.2"/>
    </reaction>
</comment>
<comment type="cofactor">
    <cofactor evidence="1">
        <name>Zn(2+)</name>
        <dbReference type="ChEBI" id="CHEBI:29105"/>
    </cofactor>
    <text evidence="1">Binds 3 Zn(2+) ions.</text>
</comment>
<comment type="similarity">
    <text evidence="1">Belongs to the AP endonuclease 2 family.</text>
</comment>
<reference key="1">
    <citation type="submission" date="2009-07" db="EMBL/GenBank/DDBJ databases">
        <title>Complete sequence of Pectobacterium carotovorum subsp. carotovorum PC1.</title>
        <authorList>
            <consortium name="US DOE Joint Genome Institute"/>
            <person name="Lucas S."/>
            <person name="Copeland A."/>
            <person name="Lapidus A."/>
            <person name="Glavina del Rio T."/>
            <person name="Tice H."/>
            <person name="Bruce D."/>
            <person name="Goodwin L."/>
            <person name="Pitluck S."/>
            <person name="Munk A.C."/>
            <person name="Brettin T."/>
            <person name="Detter J.C."/>
            <person name="Han C."/>
            <person name="Tapia R."/>
            <person name="Larimer F."/>
            <person name="Land M."/>
            <person name="Hauser L."/>
            <person name="Kyrpides N."/>
            <person name="Mikhailova N."/>
            <person name="Balakrishnan V."/>
            <person name="Glasner J."/>
            <person name="Perna N.T."/>
        </authorList>
    </citation>
    <scope>NUCLEOTIDE SEQUENCE [LARGE SCALE GENOMIC DNA]</scope>
    <source>
        <strain>PC1</strain>
    </source>
</reference>
<accession>C6DEL1</accession>
<keyword id="KW-0227">DNA damage</keyword>
<keyword id="KW-0234">DNA repair</keyword>
<keyword id="KW-0255">Endonuclease</keyword>
<keyword id="KW-0378">Hydrolase</keyword>
<keyword id="KW-0479">Metal-binding</keyword>
<keyword id="KW-0540">Nuclease</keyword>
<keyword id="KW-0862">Zinc</keyword>
<protein>
    <recommendedName>
        <fullName evidence="1">Probable endonuclease 4</fullName>
        <ecNumber evidence="1">3.1.21.2</ecNumber>
    </recommendedName>
    <alternativeName>
        <fullName evidence="1">Endodeoxyribonuclease IV</fullName>
    </alternativeName>
    <alternativeName>
        <fullName evidence="1">Endonuclease IV</fullName>
    </alternativeName>
</protein>
<dbReference type="EC" id="3.1.21.2" evidence="1"/>
<dbReference type="EMBL" id="CP001657">
    <property type="protein sequence ID" value="ACT12696.1"/>
    <property type="molecule type" value="Genomic_DNA"/>
</dbReference>
<dbReference type="RefSeq" id="WP_015839915.1">
    <property type="nucleotide sequence ID" value="NC_012917.1"/>
</dbReference>
<dbReference type="SMR" id="C6DEL1"/>
<dbReference type="STRING" id="561230.PC1_1655"/>
<dbReference type="GeneID" id="67793658"/>
<dbReference type="KEGG" id="pct:PC1_1655"/>
<dbReference type="eggNOG" id="COG0648">
    <property type="taxonomic scope" value="Bacteria"/>
</dbReference>
<dbReference type="HOGENOM" id="CLU_025885_0_4_6"/>
<dbReference type="OrthoDB" id="9805666at2"/>
<dbReference type="Proteomes" id="UP000002736">
    <property type="component" value="Chromosome"/>
</dbReference>
<dbReference type="GO" id="GO:0008833">
    <property type="term" value="F:deoxyribonuclease IV (phage-T4-induced) activity"/>
    <property type="evidence" value="ECO:0007669"/>
    <property type="project" value="UniProtKB-UniRule"/>
</dbReference>
<dbReference type="GO" id="GO:0003677">
    <property type="term" value="F:DNA binding"/>
    <property type="evidence" value="ECO:0007669"/>
    <property type="project" value="InterPro"/>
</dbReference>
<dbReference type="GO" id="GO:0003906">
    <property type="term" value="F:DNA-(apurinic or apyrimidinic site) endonuclease activity"/>
    <property type="evidence" value="ECO:0007669"/>
    <property type="project" value="TreeGrafter"/>
</dbReference>
<dbReference type="GO" id="GO:0008081">
    <property type="term" value="F:phosphoric diester hydrolase activity"/>
    <property type="evidence" value="ECO:0007669"/>
    <property type="project" value="TreeGrafter"/>
</dbReference>
<dbReference type="GO" id="GO:0008270">
    <property type="term" value="F:zinc ion binding"/>
    <property type="evidence" value="ECO:0007669"/>
    <property type="project" value="UniProtKB-UniRule"/>
</dbReference>
<dbReference type="GO" id="GO:0006284">
    <property type="term" value="P:base-excision repair"/>
    <property type="evidence" value="ECO:0007669"/>
    <property type="project" value="TreeGrafter"/>
</dbReference>
<dbReference type="CDD" id="cd00019">
    <property type="entry name" value="AP2Ec"/>
    <property type="match status" value="1"/>
</dbReference>
<dbReference type="FunFam" id="3.20.20.150:FF:000001">
    <property type="entry name" value="Probable endonuclease 4"/>
    <property type="match status" value="1"/>
</dbReference>
<dbReference type="Gene3D" id="3.20.20.150">
    <property type="entry name" value="Divalent-metal-dependent TIM barrel enzymes"/>
    <property type="match status" value="1"/>
</dbReference>
<dbReference type="HAMAP" id="MF_00152">
    <property type="entry name" value="Nfo"/>
    <property type="match status" value="1"/>
</dbReference>
<dbReference type="InterPro" id="IPR001719">
    <property type="entry name" value="AP_endonuc_2"/>
</dbReference>
<dbReference type="InterPro" id="IPR018246">
    <property type="entry name" value="AP_endonuc_F2_Zn_BS"/>
</dbReference>
<dbReference type="InterPro" id="IPR036237">
    <property type="entry name" value="Xyl_isomerase-like_sf"/>
</dbReference>
<dbReference type="InterPro" id="IPR013022">
    <property type="entry name" value="Xyl_isomerase-like_TIM-brl"/>
</dbReference>
<dbReference type="NCBIfam" id="TIGR00587">
    <property type="entry name" value="nfo"/>
    <property type="match status" value="1"/>
</dbReference>
<dbReference type="NCBIfam" id="NF002199">
    <property type="entry name" value="PRK01060.1-4"/>
    <property type="match status" value="1"/>
</dbReference>
<dbReference type="PANTHER" id="PTHR21445:SF0">
    <property type="entry name" value="APURINIC-APYRIMIDINIC ENDONUCLEASE"/>
    <property type="match status" value="1"/>
</dbReference>
<dbReference type="PANTHER" id="PTHR21445">
    <property type="entry name" value="ENDONUCLEASE IV ENDODEOXYRIBONUCLEASE IV"/>
    <property type="match status" value="1"/>
</dbReference>
<dbReference type="Pfam" id="PF01261">
    <property type="entry name" value="AP_endonuc_2"/>
    <property type="match status" value="1"/>
</dbReference>
<dbReference type="SMART" id="SM00518">
    <property type="entry name" value="AP2Ec"/>
    <property type="match status" value="1"/>
</dbReference>
<dbReference type="SUPFAM" id="SSF51658">
    <property type="entry name" value="Xylose isomerase-like"/>
    <property type="match status" value="1"/>
</dbReference>
<dbReference type="PROSITE" id="PS00729">
    <property type="entry name" value="AP_NUCLEASE_F2_1"/>
    <property type="match status" value="1"/>
</dbReference>
<dbReference type="PROSITE" id="PS00730">
    <property type="entry name" value="AP_NUCLEASE_F2_2"/>
    <property type="match status" value="1"/>
</dbReference>
<dbReference type="PROSITE" id="PS00731">
    <property type="entry name" value="AP_NUCLEASE_F2_3"/>
    <property type="match status" value="1"/>
</dbReference>
<dbReference type="PROSITE" id="PS51432">
    <property type="entry name" value="AP_NUCLEASE_F2_4"/>
    <property type="match status" value="1"/>
</dbReference>
<sequence length="281" mass="30909">MKYIGAHVSASGGVDQAVIRAHEIKATAFALFTKNQRQWQAAPLSTEVIDRFKAACEQYAYTSAQILPHDSYLINLGHPDAEALEKSRIAFIDEMARCQQLGLSLLNFHPGSHLKQIEEADCLARIAESINIALAETDGVTAVIENTAGQGSNLGFRFEHLAAIIDGVEDKSRVGVCIDTCHAFAGGYDLRTEADCEATFAEFDRIVGFRYLRGMHLNDAKSAFASRVDRHHSLGEGNIGKTAFSYIMKDARFDGIPMILETINPDIWADEIAWLKSEAQC</sequence>
<name>END4_PECCP</name>
<organism>
    <name type="scientific">Pectobacterium carotovorum subsp. carotovorum (strain PC1)</name>
    <dbReference type="NCBI Taxonomy" id="561230"/>
    <lineage>
        <taxon>Bacteria</taxon>
        <taxon>Pseudomonadati</taxon>
        <taxon>Pseudomonadota</taxon>
        <taxon>Gammaproteobacteria</taxon>
        <taxon>Enterobacterales</taxon>
        <taxon>Pectobacteriaceae</taxon>
        <taxon>Pectobacterium</taxon>
    </lineage>
</organism>
<proteinExistence type="inferred from homology"/>
<feature type="chain" id="PRO_1000203442" description="Probable endonuclease 4">
    <location>
        <begin position="1"/>
        <end position="281"/>
    </location>
</feature>
<feature type="binding site" evidence="1">
    <location>
        <position position="69"/>
    </location>
    <ligand>
        <name>Zn(2+)</name>
        <dbReference type="ChEBI" id="CHEBI:29105"/>
        <label>1</label>
    </ligand>
</feature>
<feature type="binding site" evidence="1">
    <location>
        <position position="109"/>
    </location>
    <ligand>
        <name>Zn(2+)</name>
        <dbReference type="ChEBI" id="CHEBI:29105"/>
        <label>1</label>
    </ligand>
</feature>
<feature type="binding site" evidence="1">
    <location>
        <position position="145"/>
    </location>
    <ligand>
        <name>Zn(2+)</name>
        <dbReference type="ChEBI" id="CHEBI:29105"/>
        <label>1</label>
    </ligand>
</feature>
<feature type="binding site" evidence="1">
    <location>
        <position position="145"/>
    </location>
    <ligand>
        <name>Zn(2+)</name>
        <dbReference type="ChEBI" id="CHEBI:29105"/>
        <label>2</label>
    </ligand>
</feature>
<feature type="binding site" evidence="1">
    <location>
        <position position="179"/>
    </location>
    <ligand>
        <name>Zn(2+)</name>
        <dbReference type="ChEBI" id="CHEBI:29105"/>
        <label>2</label>
    </ligand>
</feature>
<feature type="binding site" evidence="1">
    <location>
        <position position="182"/>
    </location>
    <ligand>
        <name>Zn(2+)</name>
        <dbReference type="ChEBI" id="CHEBI:29105"/>
        <label>3</label>
    </ligand>
</feature>
<feature type="binding site" evidence="1">
    <location>
        <position position="216"/>
    </location>
    <ligand>
        <name>Zn(2+)</name>
        <dbReference type="ChEBI" id="CHEBI:29105"/>
        <label>2</label>
    </ligand>
</feature>
<feature type="binding site" evidence="1">
    <location>
        <position position="229"/>
    </location>
    <ligand>
        <name>Zn(2+)</name>
        <dbReference type="ChEBI" id="CHEBI:29105"/>
        <label>3</label>
    </ligand>
</feature>
<feature type="binding site" evidence="1">
    <location>
        <position position="231"/>
    </location>
    <ligand>
        <name>Zn(2+)</name>
        <dbReference type="ChEBI" id="CHEBI:29105"/>
        <label>3</label>
    </ligand>
</feature>
<feature type="binding site" evidence="1">
    <location>
        <position position="261"/>
    </location>
    <ligand>
        <name>Zn(2+)</name>
        <dbReference type="ChEBI" id="CHEBI:29105"/>
        <label>2</label>
    </ligand>
</feature>